<comment type="function">
    <text evidence="1">Forms part of the ribosomal stalk which helps the ribosome interact with GTP-bound translation factors.</text>
</comment>
<comment type="subunit">
    <text evidence="1">Part of the ribosomal stalk of the 50S ribosomal subunit. Interacts with L10 and the large rRNA to form the base of the stalk. L10 forms an elongated spine to which L12 dimers bind in a sequential fashion forming a multimeric L10(L12)X complex.</text>
</comment>
<comment type="PTM">
    <text evidence="1">One or more lysine residues are methylated.</text>
</comment>
<comment type="similarity">
    <text evidence="1">Belongs to the universal ribosomal protein uL11 family.</text>
</comment>
<keyword id="KW-0488">Methylation</keyword>
<keyword id="KW-1185">Reference proteome</keyword>
<keyword id="KW-0687">Ribonucleoprotein</keyword>
<keyword id="KW-0689">Ribosomal protein</keyword>
<keyword id="KW-0694">RNA-binding</keyword>
<keyword id="KW-0699">rRNA-binding</keyword>
<sequence length="142" mass="15108">MPPKKKIAALVKVQLQAGAATPAPPVGTALGPHGVNIMEFCKAYNAQTESMRGNVIPVEITIYEDRSFTFITKTPPAAELIKKAAGLQKGSGVPHKEKVGKLTKDQVREIAQTKLPDLNANDIEAAMKIVEGTARSMGVTTD</sequence>
<proteinExistence type="inferred from homology"/>
<dbReference type="EMBL" id="CP000509">
    <property type="protein sequence ID" value="ABL80221.1"/>
    <property type="molecule type" value="Genomic_DNA"/>
</dbReference>
<dbReference type="RefSeq" id="WP_011754170.1">
    <property type="nucleotide sequence ID" value="NC_008699.1"/>
</dbReference>
<dbReference type="SMR" id="A1SEI6"/>
<dbReference type="STRING" id="196162.Noca_0696"/>
<dbReference type="KEGG" id="nca:Noca_0696"/>
<dbReference type="eggNOG" id="COG0080">
    <property type="taxonomic scope" value="Bacteria"/>
</dbReference>
<dbReference type="HOGENOM" id="CLU_074237_2_1_11"/>
<dbReference type="OrthoDB" id="9802408at2"/>
<dbReference type="Proteomes" id="UP000000640">
    <property type="component" value="Chromosome"/>
</dbReference>
<dbReference type="GO" id="GO:0022625">
    <property type="term" value="C:cytosolic large ribosomal subunit"/>
    <property type="evidence" value="ECO:0007669"/>
    <property type="project" value="TreeGrafter"/>
</dbReference>
<dbReference type="GO" id="GO:0070180">
    <property type="term" value="F:large ribosomal subunit rRNA binding"/>
    <property type="evidence" value="ECO:0007669"/>
    <property type="project" value="UniProtKB-UniRule"/>
</dbReference>
<dbReference type="GO" id="GO:0003735">
    <property type="term" value="F:structural constituent of ribosome"/>
    <property type="evidence" value="ECO:0007669"/>
    <property type="project" value="InterPro"/>
</dbReference>
<dbReference type="GO" id="GO:0006412">
    <property type="term" value="P:translation"/>
    <property type="evidence" value="ECO:0007669"/>
    <property type="project" value="UniProtKB-UniRule"/>
</dbReference>
<dbReference type="CDD" id="cd00349">
    <property type="entry name" value="Ribosomal_L11"/>
    <property type="match status" value="1"/>
</dbReference>
<dbReference type="FunFam" id="1.10.10.250:FF:000001">
    <property type="entry name" value="50S ribosomal protein L11"/>
    <property type="match status" value="1"/>
</dbReference>
<dbReference type="FunFam" id="3.30.1550.10:FF:000001">
    <property type="entry name" value="50S ribosomal protein L11"/>
    <property type="match status" value="1"/>
</dbReference>
<dbReference type="Gene3D" id="1.10.10.250">
    <property type="entry name" value="Ribosomal protein L11, C-terminal domain"/>
    <property type="match status" value="1"/>
</dbReference>
<dbReference type="Gene3D" id="3.30.1550.10">
    <property type="entry name" value="Ribosomal protein L11/L12, N-terminal domain"/>
    <property type="match status" value="1"/>
</dbReference>
<dbReference type="HAMAP" id="MF_00736">
    <property type="entry name" value="Ribosomal_uL11"/>
    <property type="match status" value="1"/>
</dbReference>
<dbReference type="InterPro" id="IPR000911">
    <property type="entry name" value="Ribosomal_uL11"/>
</dbReference>
<dbReference type="InterPro" id="IPR006519">
    <property type="entry name" value="Ribosomal_uL11_bac-typ"/>
</dbReference>
<dbReference type="InterPro" id="IPR020783">
    <property type="entry name" value="Ribosomal_uL11_C"/>
</dbReference>
<dbReference type="InterPro" id="IPR036769">
    <property type="entry name" value="Ribosomal_uL11_C_sf"/>
</dbReference>
<dbReference type="InterPro" id="IPR020784">
    <property type="entry name" value="Ribosomal_uL11_N"/>
</dbReference>
<dbReference type="InterPro" id="IPR036796">
    <property type="entry name" value="Ribosomal_uL11_N_sf"/>
</dbReference>
<dbReference type="NCBIfam" id="TIGR01632">
    <property type="entry name" value="L11_bact"/>
    <property type="match status" value="1"/>
</dbReference>
<dbReference type="PANTHER" id="PTHR11661">
    <property type="entry name" value="60S RIBOSOMAL PROTEIN L12"/>
    <property type="match status" value="1"/>
</dbReference>
<dbReference type="PANTHER" id="PTHR11661:SF1">
    <property type="entry name" value="LARGE RIBOSOMAL SUBUNIT PROTEIN UL11M"/>
    <property type="match status" value="1"/>
</dbReference>
<dbReference type="Pfam" id="PF00298">
    <property type="entry name" value="Ribosomal_L11"/>
    <property type="match status" value="1"/>
</dbReference>
<dbReference type="Pfam" id="PF03946">
    <property type="entry name" value="Ribosomal_L11_N"/>
    <property type="match status" value="1"/>
</dbReference>
<dbReference type="SMART" id="SM00649">
    <property type="entry name" value="RL11"/>
    <property type="match status" value="1"/>
</dbReference>
<dbReference type="SUPFAM" id="SSF54747">
    <property type="entry name" value="Ribosomal L11/L12e N-terminal domain"/>
    <property type="match status" value="1"/>
</dbReference>
<dbReference type="SUPFAM" id="SSF46906">
    <property type="entry name" value="Ribosomal protein L11, C-terminal domain"/>
    <property type="match status" value="1"/>
</dbReference>
<protein>
    <recommendedName>
        <fullName evidence="1">Large ribosomal subunit protein uL11</fullName>
    </recommendedName>
    <alternativeName>
        <fullName evidence="2">50S ribosomal protein L11</fullName>
    </alternativeName>
</protein>
<reference key="1">
    <citation type="submission" date="2006-12" db="EMBL/GenBank/DDBJ databases">
        <title>Complete sequence of chromosome 1 of Nocardioides sp. JS614.</title>
        <authorList>
            <person name="Copeland A."/>
            <person name="Lucas S."/>
            <person name="Lapidus A."/>
            <person name="Barry K."/>
            <person name="Detter J.C."/>
            <person name="Glavina del Rio T."/>
            <person name="Hammon N."/>
            <person name="Israni S."/>
            <person name="Dalin E."/>
            <person name="Tice H."/>
            <person name="Pitluck S."/>
            <person name="Thompson L.S."/>
            <person name="Brettin T."/>
            <person name="Bruce D."/>
            <person name="Han C."/>
            <person name="Tapia R."/>
            <person name="Schmutz J."/>
            <person name="Larimer F."/>
            <person name="Land M."/>
            <person name="Hauser L."/>
            <person name="Kyrpides N."/>
            <person name="Kim E."/>
            <person name="Mattes T."/>
            <person name="Gossett J."/>
            <person name="Richardson P."/>
        </authorList>
    </citation>
    <scope>NUCLEOTIDE SEQUENCE [LARGE SCALE GENOMIC DNA]</scope>
    <source>
        <strain>ATCC BAA-499 / JS614</strain>
    </source>
</reference>
<feature type="chain" id="PRO_1000046230" description="Large ribosomal subunit protein uL11">
    <location>
        <begin position="1"/>
        <end position="142"/>
    </location>
</feature>
<organism>
    <name type="scientific">Nocardioides sp. (strain ATCC BAA-499 / JS614)</name>
    <dbReference type="NCBI Taxonomy" id="196162"/>
    <lineage>
        <taxon>Bacteria</taxon>
        <taxon>Bacillati</taxon>
        <taxon>Actinomycetota</taxon>
        <taxon>Actinomycetes</taxon>
        <taxon>Propionibacteriales</taxon>
        <taxon>Nocardioidaceae</taxon>
        <taxon>Nocardioides</taxon>
    </lineage>
</organism>
<evidence type="ECO:0000255" key="1">
    <source>
        <dbReference type="HAMAP-Rule" id="MF_00736"/>
    </source>
</evidence>
<evidence type="ECO:0000305" key="2"/>
<gene>
    <name evidence="1" type="primary">rplK</name>
    <name type="ordered locus">Noca_0696</name>
</gene>
<name>RL11_NOCSJ</name>
<accession>A1SEI6</accession>